<organism>
    <name type="scientific">Escherichia coli (strain K12)</name>
    <dbReference type="NCBI Taxonomy" id="83333"/>
    <lineage>
        <taxon>Bacteria</taxon>
        <taxon>Pseudomonadati</taxon>
        <taxon>Pseudomonadota</taxon>
        <taxon>Gammaproteobacteria</taxon>
        <taxon>Enterobacterales</taxon>
        <taxon>Enterobacteriaceae</taxon>
        <taxon>Escherichia</taxon>
    </lineage>
</organism>
<name>DDPC_ECOLI</name>
<keyword id="KW-0997">Cell inner membrane</keyword>
<keyword id="KW-1003">Cell membrane</keyword>
<keyword id="KW-0472">Membrane</keyword>
<keyword id="KW-0571">Peptide transport</keyword>
<keyword id="KW-0653">Protein transport</keyword>
<keyword id="KW-1185">Reference proteome</keyword>
<keyword id="KW-0812">Transmembrane</keyword>
<keyword id="KW-1133">Transmembrane helix</keyword>
<keyword id="KW-0813">Transport</keyword>
<protein>
    <recommendedName>
        <fullName>Probable D,D-dipeptide transport system permease protein DdpC</fullName>
    </recommendedName>
</protein>
<sequence>MMLSEETSAVRPQKQTRFNGAKLVWMLKGSPLTVTSAVIIVLMLLMMIFSPWLATHDPNAIDLTARLLPPSAAHWFGTDEVGRDLFSRVLVGSQQSILAGLVVVAIAGMIGSLLGCLSGVLGGRADAIIMRIMDIMLSIPSLVLTMALAAALGPSLFNAMLAIAIVRIPFYVRLARGQALVVRQYTYVQAAKTFGASRWHLINWHILRNSLPPLIVQASLDIGSAILMAATLGFIGLGAQQPSAEWGAMVANGRNYVLDQWWYCAFPGAAILLTAVGFNLFGDGIRDLLDPKAGGKQS</sequence>
<accession>P77463</accession>
<reference key="1">
    <citation type="journal article" date="1996" name="DNA Res.">
        <title>A 570-kb DNA sequence of the Escherichia coli K-12 genome corresponding to the 28.0-40.1 min region on the linkage map.</title>
        <authorList>
            <person name="Aiba H."/>
            <person name="Baba T."/>
            <person name="Fujita K."/>
            <person name="Hayashi K."/>
            <person name="Inada T."/>
            <person name="Isono K."/>
            <person name="Itoh T."/>
            <person name="Kasai H."/>
            <person name="Kashimoto K."/>
            <person name="Kimura S."/>
            <person name="Kitakawa M."/>
            <person name="Kitagawa M."/>
            <person name="Makino K."/>
            <person name="Miki T."/>
            <person name="Mizobuchi K."/>
            <person name="Mori H."/>
            <person name="Mori T."/>
            <person name="Motomura K."/>
            <person name="Nakade S."/>
            <person name="Nakamura Y."/>
            <person name="Nashimoto H."/>
            <person name="Nishio Y."/>
            <person name="Oshima T."/>
            <person name="Saito N."/>
            <person name="Sampei G."/>
            <person name="Seki Y."/>
            <person name="Sivasundaram S."/>
            <person name="Tagami H."/>
            <person name="Takeda J."/>
            <person name="Takemoto K."/>
            <person name="Takeuchi Y."/>
            <person name="Wada C."/>
            <person name="Yamamoto Y."/>
            <person name="Horiuchi T."/>
        </authorList>
    </citation>
    <scope>NUCLEOTIDE SEQUENCE [LARGE SCALE GENOMIC DNA]</scope>
    <source>
        <strain>K12 / W3110 / ATCC 27325 / DSM 5911</strain>
    </source>
</reference>
<reference key="2">
    <citation type="journal article" date="1997" name="Science">
        <title>The complete genome sequence of Escherichia coli K-12.</title>
        <authorList>
            <person name="Blattner F.R."/>
            <person name="Plunkett G. III"/>
            <person name="Bloch C.A."/>
            <person name="Perna N.T."/>
            <person name="Burland V."/>
            <person name="Riley M."/>
            <person name="Collado-Vides J."/>
            <person name="Glasner J.D."/>
            <person name="Rode C.K."/>
            <person name="Mayhew G.F."/>
            <person name="Gregor J."/>
            <person name="Davis N.W."/>
            <person name="Kirkpatrick H.A."/>
            <person name="Goeden M.A."/>
            <person name="Rose D.J."/>
            <person name="Mau B."/>
            <person name="Shao Y."/>
        </authorList>
    </citation>
    <scope>NUCLEOTIDE SEQUENCE [LARGE SCALE GENOMIC DNA]</scope>
    <source>
        <strain>K12 / MG1655 / ATCC 47076</strain>
    </source>
</reference>
<reference key="3">
    <citation type="journal article" date="2006" name="Mol. Syst. Biol.">
        <title>Highly accurate genome sequences of Escherichia coli K-12 strains MG1655 and W3110.</title>
        <authorList>
            <person name="Hayashi K."/>
            <person name="Morooka N."/>
            <person name="Yamamoto Y."/>
            <person name="Fujita K."/>
            <person name="Isono K."/>
            <person name="Choi S."/>
            <person name="Ohtsubo E."/>
            <person name="Baba T."/>
            <person name="Wanner B.L."/>
            <person name="Mori H."/>
            <person name="Horiuchi T."/>
        </authorList>
    </citation>
    <scope>NUCLEOTIDE SEQUENCE [LARGE SCALE GENOMIC DNA]</scope>
    <source>
        <strain>K12 / W3110 / ATCC 27325 / DSM 5911</strain>
    </source>
</reference>
<reference key="4">
    <citation type="journal article" date="1998" name="Chem. Biol.">
        <title>Homologs of the vancomycin resistance D-Ala-D-Ala dipeptidase VanX in Streptomyces toyocaensis, Escherichia coli and Synechocystis: attributes of catalytic efficiency, stereoselectivity and regulation with implications for function.</title>
        <authorList>
            <person name="Lessard I.A.D."/>
            <person name="Pratt S.D."/>
            <person name="McCafferty D.G."/>
            <person name="Bussiere D.E."/>
            <person name="Hutchins C."/>
            <person name="Wanner B.L."/>
            <person name="Katz L."/>
            <person name="Walsh C.T."/>
        </authorList>
    </citation>
    <scope>INDUCTION</scope>
</reference>
<reference key="5">
    <citation type="journal article" date="1999" name="Proc. Natl. Acad. Sci. U.S.A.">
        <title>VanX, a bacterial D-alanyl-D-alanine dipeptidase: resistance, immunity, or survival function?</title>
        <authorList>
            <person name="Lessard I.A.D."/>
            <person name="Walsh C.T."/>
        </authorList>
    </citation>
    <scope>GENE NAME</scope>
</reference>
<reference key="6">
    <citation type="journal article" date="2002" name="Proc. Natl. Acad. Sci. U.S.A.">
        <title>Rapid topology mapping of Escherichia coli inner-membrane proteins by prediction and PhoA/GFP fusion analysis.</title>
        <authorList>
            <person name="Drew D."/>
            <person name="Sjoestrand D."/>
            <person name="Nilsson J."/>
            <person name="Urbig T."/>
            <person name="Chin C.-N."/>
            <person name="de Gier J.-W."/>
            <person name="von Heijne G."/>
        </authorList>
    </citation>
    <scope>TOPOLOGY</scope>
    <source>
        <strain>K12 / JM109 / ATCC 53323</strain>
    </source>
</reference>
<reference key="7">
    <citation type="journal article" date="2005" name="Science">
        <title>Global topology analysis of the Escherichia coli inner membrane proteome.</title>
        <authorList>
            <person name="Daley D.O."/>
            <person name="Rapp M."/>
            <person name="Granseth E."/>
            <person name="Melen K."/>
            <person name="Drew D."/>
            <person name="von Heijne G."/>
        </authorList>
    </citation>
    <scope>TOPOLOGY [LARGE SCALE ANALYSIS]</scope>
    <source>
        <strain>K12 / MG1655 / ATCC 47076</strain>
    </source>
</reference>
<proteinExistence type="evidence at protein level"/>
<gene>
    <name type="primary">ddpC</name>
    <name type="synonym">yddQ</name>
    <name type="ordered locus">b1485</name>
    <name type="ordered locus">JW1480</name>
</gene>
<evidence type="ECO:0000255" key="1"/>
<evidence type="ECO:0000255" key="2">
    <source>
        <dbReference type="PROSITE-ProRule" id="PRU00441"/>
    </source>
</evidence>
<evidence type="ECO:0000269" key="3">
    <source>
    </source>
</evidence>
<evidence type="ECO:0000305" key="4"/>
<comment type="function">
    <text>Part of the ABC transporter complex DdpABCDF, which is probably involved in D,D-dipeptide transport. Probably responsible for the translocation of the substrate across the membrane.</text>
</comment>
<comment type="subunit">
    <text evidence="4">The complex is composed of two ATP-binding proteins (DdpD and DdpF), two transmembrane proteins (DdpB and DdpC) and a solute-binding protein (DdpA).</text>
</comment>
<comment type="subcellular location">
    <subcellularLocation>
        <location>Cell inner membrane</location>
        <topology>Multi-pass membrane protein</topology>
    </subcellularLocation>
</comment>
<comment type="induction">
    <text evidence="3">Induced by RpoS in stationary phase.</text>
</comment>
<comment type="similarity">
    <text evidence="4">Belongs to the binding-protein-dependent transport system permease family. OppBC subfamily.</text>
</comment>
<dbReference type="EMBL" id="U00096">
    <property type="protein sequence ID" value="AAC74558.1"/>
    <property type="molecule type" value="Genomic_DNA"/>
</dbReference>
<dbReference type="EMBL" id="AP009048">
    <property type="protein sequence ID" value="BAA15140.1"/>
    <property type="molecule type" value="Genomic_DNA"/>
</dbReference>
<dbReference type="PIR" id="H64901">
    <property type="entry name" value="H64901"/>
</dbReference>
<dbReference type="RefSeq" id="NP_416002.1">
    <property type="nucleotide sequence ID" value="NC_000913.3"/>
</dbReference>
<dbReference type="RefSeq" id="WP_000979626.1">
    <property type="nucleotide sequence ID" value="NZ_SSZK01000038.1"/>
</dbReference>
<dbReference type="SMR" id="P77463"/>
<dbReference type="BioGRID" id="4260963">
    <property type="interactions" value="275"/>
</dbReference>
<dbReference type="ComplexPortal" id="CPX-4321">
    <property type="entry name" value="Dipeptide ABC transporter complex"/>
</dbReference>
<dbReference type="FunCoup" id="P77463">
    <property type="interactions" value="279"/>
</dbReference>
<dbReference type="IntAct" id="P77463">
    <property type="interactions" value="2"/>
</dbReference>
<dbReference type="STRING" id="511145.b1485"/>
<dbReference type="TCDB" id="3.A.1.5.38">
    <property type="family name" value="the atp-binding cassette (abc) superfamily"/>
</dbReference>
<dbReference type="PaxDb" id="511145-b1485"/>
<dbReference type="EnsemblBacteria" id="AAC74558">
    <property type="protein sequence ID" value="AAC74558"/>
    <property type="gene ID" value="b1485"/>
</dbReference>
<dbReference type="GeneID" id="946028"/>
<dbReference type="KEGG" id="ecj:JW1480"/>
<dbReference type="KEGG" id="eco:b1485"/>
<dbReference type="KEGG" id="ecoc:C3026_08605"/>
<dbReference type="PATRIC" id="fig|1411691.4.peg.782"/>
<dbReference type="EchoBASE" id="EB3549"/>
<dbReference type="eggNOG" id="COG1173">
    <property type="taxonomic scope" value="Bacteria"/>
</dbReference>
<dbReference type="HOGENOM" id="CLU_028518_1_1_6"/>
<dbReference type="InParanoid" id="P77463"/>
<dbReference type="OMA" id="TRPWLFW"/>
<dbReference type="OrthoDB" id="9805884at2"/>
<dbReference type="PhylomeDB" id="P77463"/>
<dbReference type="BioCyc" id="EcoCyc:YDDQ-MONOMER"/>
<dbReference type="PRO" id="PR:P77463"/>
<dbReference type="Proteomes" id="UP000000625">
    <property type="component" value="Chromosome"/>
</dbReference>
<dbReference type="GO" id="GO:0055052">
    <property type="term" value="C:ATP-binding cassette (ABC) transporter complex, substrate-binding subunit-containing"/>
    <property type="evidence" value="ECO:0000303"/>
    <property type="project" value="ComplexPortal"/>
</dbReference>
<dbReference type="GO" id="GO:0016020">
    <property type="term" value="C:membrane"/>
    <property type="evidence" value="ECO:0000303"/>
    <property type="project" value="ComplexPortal"/>
</dbReference>
<dbReference type="GO" id="GO:0005886">
    <property type="term" value="C:plasma membrane"/>
    <property type="evidence" value="ECO:0000314"/>
    <property type="project" value="EcoCyc"/>
</dbReference>
<dbReference type="GO" id="GO:0071916">
    <property type="term" value="F:dipeptide transmembrane transporter activity"/>
    <property type="evidence" value="ECO:0000318"/>
    <property type="project" value="GO_Central"/>
</dbReference>
<dbReference type="GO" id="GO:0042938">
    <property type="term" value="P:dipeptide transport"/>
    <property type="evidence" value="ECO:0000303"/>
    <property type="project" value="ComplexPortal"/>
</dbReference>
<dbReference type="GO" id="GO:0015031">
    <property type="term" value="P:protein transport"/>
    <property type="evidence" value="ECO:0007669"/>
    <property type="project" value="UniProtKB-KW"/>
</dbReference>
<dbReference type="CDD" id="cd06261">
    <property type="entry name" value="TM_PBP2"/>
    <property type="match status" value="1"/>
</dbReference>
<dbReference type="FunFam" id="1.10.3720.10:FF:000058">
    <property type="entry name" value="D,D-dipeptide ABC transporter permease"/>
    <property type="match status" value="1"/>
</dbReference>
<dbReference type="Gene3D" id="1.10.3720.10">
    <property type="entry name" value="MetI-like"/>
    <property type="match status" value="1"/>
</dbReference>
<dbReference type="InterPro" id="IPR050366">
    <property type="entry name" value="BP-dependent_transpt_permease"/>
</dbReference>
<dbReference type="InterPro" id="IPR000515">
    <property type="entry name" value="MetI-like"/>
</dbReference>
<dbReference type="InterPro" id="IPR035906">
    <property type="entry name" value="MetI-like_sf"/>
</dbReference>
<dbReference type="InterPro" id="IPR025966">
    <property type="entry name" value="OppC_N"/>
</dbReference>
<dbReference type="NCBIfam" id="NF007376">
    <property type="entry name" value="PRK09881.1"/>
    <property type="match status" value="1"/>
</dbReference>
<dbReference type="PANTHER" id="PTHR43386:SF1">
    <property type="entry name" value="D,D-DIPEPTIDE TRANSPORT SYSTEM PERMEASE PROTEIN DDPC-RELATED"/>
    <property type="match status" value="1"/>
</dbReference>
<dbReference type="PANTHER" id="PTHR43386">
    <property type="entry name" value="OLIGOPEPTIDE TRANSPORT SYSTEM PERMEASE PROTEIN APPC"/>
    <property type="match status" value="1"/>
</dbReference>
<dbReference type="Pfam" id="PF00528">
    <property type="entry name" value="BPD_transp_1"/>
    <property type="match status" value="1"/>
</dbReference>
<dbReference type="Pfam" id="PF12911">
    <property type="entry name" value="OppC_N"/>
    <property type="match status" value="1"/>
</dbReference>
<dbReference type="SUPFAM" id="SSF161098">
    <property type="entry name" value="MetI-like"/>
    <property type="match status" value="1"/>
</dbReference>
<dbReference type="PROSITE" id="PS50928">
    <property type="entry name" value="ABC_TM1"/>
    <property type="match status" value="1"/>
</dbReference>
<feature type="chain" id="PRO_0000060245" description="Probable D,D-dipeptide transport system permease protein DdpC">
    <location>
        <begin position="1"/>
        <end position="298"/>
    </location>
</feature>
<feature type="topological domain" description="Cytoplasmic" evidence="1">
    <location>
        <begin position="1"/>
        <end position="33"/>
    </location>
</feature>
<feature type="transmembrane region" description="Helical" evidence="2">
    <location>
        <begin position="34"/>
        <end position="54"/>
    </location>
</feature>
<feature type="topological domain" description="Periplasmic" evidence="1">
    <location>
        <begin position="55"/>
        <end position="96"/>
    </location>
</feature>
<feature type="transmembrane region" description="Helical" evidence="2">
    <location>
        <begin position="97"/>
        <end position="117"/>
    </location>
</feature>
<feature type="topological domain" description="Cytoplasmic" evidence="1">
    <location>
        <begin position="118"/>
        <end position="124"/>
    </location>
</feature>
<feature type="transmembrane region" description="Helical" evidence="2">
    <location>
        <begin position="125"/>
        <end position="145"/>
    </location>
</feature>
<feature type="transmembrane region" description="Helical" evidence="2">
    <location>
        <begin position="146"/>
        <end position="166"/>
    </location>
</feature>
<feature type="topological domain" description="Cytoplasmic" evidence="1">
    <location>
        <begin position="167"/>
        <end position="217"/>
    </location>
</feature>
<feature type="transmembrane region" description="Helical" evidence="2">
    <location>
        <begin position="218"/>
        <end position="238"/>
    </location>
</feature>
<feature type="topological domain" description="Periplasmic" evidence="1">
    <location>
        <begin position="239"/>
        <end position="260"/>
    </location>
</feature>
<feature type="transmembrane region" description="Helical" evidence="2">
    <location>
        <begin position="261"/>
        <end position="281"/>
    </location>
</feature>
<feature type="topological domain" description="Cytoplasmic" evidence="1">
    <location>
        <begin position="282"/>
        <end position="298"/>
    </location>
</feature>
<feature type="domain" description="ABC transmembrane type-1" evidence="2">
    <location>
        <begin position="97"/>
        <end position="282"/>
    </location>
</feature>